<keyword id="KW-0997">Cell inner membrane</keyword>
<keyword id="KW-1003">Cell membrane</keyword>
<keyword id="KW-0472">Membrane</keyword>
<keyword id="KW-1185">Reference proteome</keyword>
<keyword id="KW-0812">Transmembrane</keyword>
<keyword id="KW-1133">Transmembrane helix</keyword>
<dbReference type="EMBL" id="CU928145">
    <property type="protein sequence ID" value="CAU97210.1"/>
    <property type="molecule type" value="Genomic_DNA"/>
</dbReference>
<dbReference type="RefSeq" id="WP_000808667.1">
    <property type="nucleotide sequence ID" value="NC_011748.1"/>
</dbReference>
<dbReference type="KEGG" id="eck:EC55989_1352"/>
<dbReference type="HOGENOM" id="CLU_089554_2_0_6"/>
<dbReference type="Proteomes" id="UP000000746">
    <property type="component" value="Chromosome"/>
</dbReference>
<dbReference type="GO" id="GO:0005886">
    <property type="term" value="C:plasma membrane"/>
    <property type="evidence" value="ECO:0007669"/>
    <property type="project" value="UniProtKB-SubCell"/>
</dbReference>
<dbReference type="HAMAP" id="MF_00189">
    <property type="entry name" value="YciB"/>
    <property type="match status" value="1"/>
</dbReference>
<dbReference type="InterPro" id="IPR006008">
    <property type="entry name" value="YciB"/>
</dbReference>
<dbReference type="NCBIfam" id="TIGR00997">
    <property type="entry name" value="ispZ"/>
    <property type="match status" value="1"/>
</dbReference>
<dbReference type="NCBIfam" id="NF001324">
    <property type="entry name" value="PRK00259.1-2"/>
    <property type="match status" value="1"/>
</dbReference>
<dbReference type="NCBIfam" id="NF001325">
    <property type="entry name" value="PRK00259.1-3"/>
    <property type="match status" value="1"/>
</dbReference>
<dbReference type="NCBIfam" id="NF001326">
    <property type="entry name" value="PRK00259.1-4"/>
    <property type="match status" value="1"/>
</dbReference>
<dbReference type="PANTHER" id="PTHR36917:SF1">
    <property type="entry name" value="INNER MEMBRANE-SPANNING PROTEIN YCIB"/>
    <property type="match status" value="1"/>
</dbReference>
<dbReference type="PANTHER" id="PTHR36917">
    <property type="entry name" value="INTRACELLULAR SEPTATION PROTEIN A-RELATED"/>
    <property type="match status" value="1"/>
</dbReference>
<dbReference type="Pfam" id="PF04279">
    <property type="entry name" value="IspA"/>
    <property type="match status" value="1"/>
</dbReference>
<comment type="function">
    <text evidence="1">Plays a role in cell envelope biogenesis, maintenance of cell envelope integrity and membrane homeostasis.</text>
</comment>
<comment type="subcellular location">
    <subcellularLocation>
        <location evidence="1">Cell inner membrane</location>
        <topology evidence="1">Multi-pass membrane protein</topology>
    </subcellularLocation>
</comment>
<comment type="similarity">
    <text evidence="1">Belongs to the YciB family.</text>
</comment>
<accession>B7LHK0</accession>
<organism>
    <name type="scientific">Escherichia coli (strain 55989 / EAEC)</name>
    <dbReference type="NCBI Taxonomy" id="585055"/>
    <lineage>
        <taxon>Bacteria</taxon>
        <taxon>Pseudomonadati</taxon>
        <taxon>Pseudomonadota</taxon>
        <taxon>Gammaproteobacteria</taxon>
        <taxon>Enterobacterales</taxon>
        <taxon>Enterobacteriaceae</taxon>
        <taxon>Escherichia</taxon>
    </lineage>
</organism>
<name>YCIB_ECO55</name>
<evidence type="ECO:0000255" key="1">
    <source>
        <dbReference type="HAMAP-Rule" id="MF_00189"/>
    </source>
</evidence>
<gene>
    <name evidence="1" type="primary">yciB</name>
    <name type="ordered locus">EC55989_1352</name>
</gene>
<feature type="chain" id="PRO_1000124254" description="Inner membrane-spanning protein YciB">
    <location>
        <begin position="1"/>
        <end position="179"/>
    </location>
</feature>
<feature type="transmembrane region" description="Helical" evidence="1">
    <location>
        <begin position="22"/>
        <end position="42"/>
    </location>
</feature>
<feature type="transmembrane region" description="Helical" evidence="1">
    <location>
        <begin position="50"/>
        <end position="70"/>
    </location>
</feature>
<feature type="transmembrane region" description="Helical" evidence="1">
    <location>
        <begin position="76"/>
        <end position="96"/>
    </location>
</feature>
<feature type="transmembrane region" description="Helical" evidence="1">
    <location>
        <begin position="121"/>
        <end position="141"/>
    </location>
</feature>
<feature type="transmembrane region" description="Helical" evidence="1">
    <location>
        <begin position="149"/>
        <end position="169"/>
    </location>
</feature>
<reference key="1">
    <citation type="journal article" date="2009" name="PLoS Genet.">
        <title>Organised genome dynamics in the Escherichia coli species results in highly diverse adaptive paths.</title>
        <authorList>
            <person name="Touchon M."/>
            <person name="Hoede C."/>
            <person name="Tenaillon O."/>
            <person name="Barbe V."/>
            <person name="Baeriswyl S."/>
            <person name="Bidet P."/>
            <person name="Bingen E."/>
            <person name="Bonacorsi S."/>
            <person name="Bouchier C."/>
            <person name="Bouvet O."/>
            <person name="Calteau A."/>
            <person name="Chiapello H."/>
            <person name="Clermont O."/>
            <person name="Cruveiller S."/>
            <person name="Danchin A."/>
            <person name="Diard M."/>
            <person name="Dossat C."/>
            <person name="Karoui M.E."/>
            <person name="Frapy E."/>
            <person name="Garry L."/>
            <person name="Ghigo J.M."/>
            <person name="Gilles A.M."/>
            <person name="Johnson J."/>
            <person name="Le Bouguenec C."/>
            <person name="Lescat M."/>
            <person name="Mangenot S."/>
            <person name="Martinez-Jehanne V."/>
            <person name="Matic I."/>
            <person name="Nassif X."/>
            <person name="Oztas S."/>
            <person name="Petit M.A."/>
            <person name="Pichon C."/>
            <person name="Rouy Z."/>
            <person name="Ruf C.S."/>
            <person name="Schneider D."/>
            <person name="Tourret J."/>
            <person name="Vacherie B."/>
            <person name="Vallenet D."/>
            <person name="Medigue C."/>
            <person name="Rocha E.P.C."/>
            <person name="Denamur E."/>
        </authorList>
    </citation>
    <scope>NUCLEOTIDE SEQUENCE [LARGE SCALE GENOMIC DNA]</scope>
    <source>
        <strain>55989 / EAEC</strain>
    </source>
</reference>
<proteinExistence type="inferred from homology"/>
<protein>
    <recommendedName>
        <fullName evidence="1">Inner membrane-spanning protein YciB</fullName>
    </recommendedName>
</protein>
<sequence length="179" mass="20790">MKQFLDFLPLVVFFAFYKIYDIYAATAALIVATAIVLIYSWVRFRKVEKMALITFVLVVVFGGLTLFFHNDEFIKWKVTVIYALFAGALLVSQWVMKKPLIQRMLGKELTLPQPVWSKLNLAWAVFFILCGLANIYIAFWLPQNIWVNFKVFGLTALTLIFTLLSGIYIYRHMPQEDKS</sequence>